<sequence>MSGFGDGYVGTAQDAVKIRRLEKQREAERRKIEELKNKSSDGQPGLLQFGSSTSEILETAFKKETVGLVTREQYVEKRVNIRTKIEEEEKEKLQKLQQEEEELQMQKRKKRRVRGDPRLSFCDEIENGSDEDEFENQEPQKKHGPVKLGKDPTVETSFLPDREREAEEQAERERLKKQWSREQELIKNEPLTITYSYWDGTGHRRVIQVRKGDSIGEFLRAVQQQLAPEFREVRTTSVENLLYVKEDLIIPHQHSFYELIINKARGKSGPLFHFDVHEDVRTIADATKEKDESHAGKVVERHWYEKNKHIFPASRWEIYDPTKKWERYTIHGD</sequence>
<organism>
    <name type="scientific">Oryza sativa subsp. japonica</name>
    <name type="common">Rice</name>
    <dbReference type="NCBI Taxonomy" id="39947"/>
    <lineage>
        <taxon>Eukaryota</taxon>
        <taxon>Viridiplantae</taxon>
        <taxon>Streptophyta</taxon>
        <taxon>Embryophyta</taxon>
        <taxon>Tracheophyta</taxon>
        <taxon>Spermatophyta</taxon>
        <taxon>Magnoliopsida</taxon>
        <taxon>Liliopsida</taxon>
        <taxon>Poales</taxon>
        <taxon>Poaceae</taxon>
        <taxon>BOP clade</taxon>
        <taxon>Oryzoideae</taxon>
        <taxon>Oryzeae</taxon>
        <taxon>Oryzinae</taxon>
        <taxon>Oryza</taxon>
        <taxon>Oryza sativa</taxon>
    </lineage>
</organism>
<gene>
    <name type="primary">XCT</name>
    <name type="ordered locus">Os09g0535300</name>
    <name type="ordered locus">LOC_Os09g36480</name>
    <name type="ORF">J023088M16</name>
    <name type="ORF">OsJ_30139</name>
    <name type="ORF">P0569E11.5</name>
</gene>
<accession>Q69JZ7</accession>
<accession>A0A0P0XQ56</accession>
<protein>
    <recommendedName>
        <fullName>Protein XAP5 CIRCADIAN TIMEKEEPER</fullName>
    </recommendedName>
</protein>
<comment type="function">
    <text evidence="1">Involved in light regulation of the circadian clock and photomorphogenesis.</text>
</comment>
<comment type="subcellular location">
    <subcellularLocation>
        <location evidence="1">Nucleus</location>
    </subcellularLocation>
</comment>
<comment type="similarity">
    <text evidence="4">Belongs to the FAM50 family.</text>
</comment>
<proteinExistence type="evidence at transcript level"/>
<feature type="chain" id="PRO_0000388467" description="Protein XAP5 CIRCADIAN TIMEKEEPER">
    <location>
        <begin position="1"/>
        <end position="333"/>
    </location>
</feature>
<feature type="region of interest" description="Disordered" evidence="3">
    <location>
        <begin position="89"/>
        <end position="171"/>
    </location>
</feature>
<feature type="coiled-coil region" evidence="2">
    <location>
        <begin position="12"/>
        <end position="43"/>
    </location>
</feature>
<feature type="coiled-coil region" evidence="2">
    <location>
        <begin position="70"/>
        <end position="116"/>
    </location>
</feature>
<feature type="compositionally biased region" description="Basic and acidic residues" evidence="3">
    <location>
        <begin position="89"/>
        <end position="98"/>
    </location>
</feature>
<feature type="compositionally biased region" description="Acidic residues" evidence="3">
    <location>
        <begin position="123"/>
        <end position="136"/>
    </location>
</feature>
<feature type="compositionally biased region" description="Basic and acidic residues" evidence="3">
    <location>
        <begin position="160"/>
        <end position="171"/>
    </location>
</feature>
<reference key="1">
    <citation type="journal article" date="2005" name="Nature">
        <title>The map-based sequence of the rice genome.</title>
        <authorList>
            <consortium name="International rice genome sequencing project (IRGSP)"/>
        </authorList>
    </citation>
    <scope>NUCLEOTIDE SEQUENCE [LARGE SCALE GENOMIC DNA]</scope>
    <source>
        <strain>cv. Nipponbare</strain>
    </source>
</reference>
<reference key="2">
    <citation type="journal article" date="2008" name="Nucleic Acids Res.">
        <title>The rice annotation project database (RAP-DB): 2008 update.</title>
        <authorList>
            <consortium name="The rice annotation project (RAP)"/>
        </authorList>
    </citation>
    <scope>GENOME REANNOTATION</scope>
    <source>
        <strain>cv. Nipponbare</strain>
    </source>
</reference>
<reference key="3">
    <citation type="journal article" date="2013" name="Rice">
        <title>Improvement of the Oryza sativa Nipponbare reference genome using next generation sequence and optical map data.</title>
        <authorList>
            <person name="Kawahara Y."/>
            <person name="de la Bastide M."/>
            <person name="Hamilton J.P."/>
            <person name="Kanamori H."/>
            <person name="McCombie W.R."/>
            <person name="Ouyang S."/>
            <person name="Schwartz D.C."/>
            <person name="Tanaka T."/>
            <person name="Wu J."/>
            <person name="Zhou S."/>
            <person name="Childs K.L."/>
            <person name="Davidson R.M."/>
            <person name="Lin H."/>
            <person name="Quesada-Ocampo L."/>
            <person name="Vaillancourt B."/>
            <person name="Sakai H."/>
            <person name="Lee S.S."/>
            <person name="Kim J."/>
            <person name="Numa H."/>
            <person name="Itoh T."/>
            <person name="Buell C.R."/>
            <person name="Matsumoto T."/>
        </authorList>
    </citation>
    <scope>GENOME REANNOTATION</scope>
    <source>
        <strain>cv. Nipponbare</strain>
    </source>
</reference>
<reference key="4">
    <citation type="journal article" date="2005" name="PLoS Biol.">
        <title>The genomes of Oryza sativa: a history of duplications.</title>
        <authorList>
            <person name="Yu J."/>
            <person name="Wang J."/>
            <person name="Lin W."/>
            <person name="Li S."/>
            <person name="Li H."/>
            <person name="Zhou J."/>
            <person name="Ni P."/>
            <person name="Dong W."/>
            <person name="Hu S."/>
            <person name="Zeng C."/>
            <person name="Zhang J."/>
            <person name="Zhang Y."/>
            <person name="Li R."/>
            <person name="Xu Z."/>
            <person name="Li S."/>
            <person name="Li X."/>
            <person name="Zheng H."/>
            <person name="Cong L."/>
            <person name="Lin L."/>
            <person name="Yin J."/>
            <person name="Geng J."/>
            <person name="Li G."/>
            <person name="Shi J."/>
            <person name="Liu J."/>
            <person name="Lv H."/>
            <person name="Li J."/>
            <person name="Wang J."/>
            <person name="Deng Y."/>
            <person name="Ran L."/>
            <person name="Shi X."/>
            <person name="Wang X."/>
            <person name="Wu Q."/>
            <person name="Li C."/>
            <person name="Ren X."/>
            <person name="Wang J."/>
            <person name="Wang X."/>
            <person name="Li D."/>
            <person name="Liu D."/>
            <person name="Zhang X."/>
            <person name="Ji Z."/>
            <person name="Zhao W."/>
            <person name="Sun Y."/>
            <person name="Zhang Z."/>
            <person name="Bao J."/>
            <person name="Han Y."/>
            <person name="Dong L."/>
            <person name="Ji J."/>
            <person name="Chen P."/>
            <person name="Wu S."/>
            <person name="Liu J."/>
            <person name="Xiao Y."/>
            <person name="Bu D."/>
            <person name="Tan J."/>
            <person name="Yang L."/>
            <person name="Ye C."/>
            <person name="Zhang J."/>
            <person name="Xu J."/>
            <person name="Zhou Y."/>
            <person name="Yu Y."/>
            <person name="Zhang B."/>
            <person name="Zhuang S."/>
            <person name="Wei H."/>
            <person name="Liu B."/>
            <person name="Lei M."/>
            <person name="Yu H."/>
            <person name="Li Y."/>
            <person name="Xu H."/>
            <person name="Wei S."/>
            <person name="He X."/>
            <person name="Fang L."/>
            <person name="Zhang Z."/>
            <person name="Zhang Y."/>
            <person name="Huang X."/>
            <person name="Su Z."/>
            <person name="Tong W."/>
            <person name="Li J."/>
            <person name="Tong Z."/>
            <person name="Li S."/>
            <person name="Ye J."/>
            <person name="Wang L."/>
            <person name="Fang L."/>
            <person name="Lei T."/>
            <person name="Chen C.-S."/>
            <person name="Chen H.-C."/>
            <person name="Xu Z."/>
            <person name="Li H."/>
            <person name="Huang H."/>
            <person name="Zhang F."/>
            <person name="Xu H."/>
            <person name="Li N."/>
            <person name="Zhao C."/>
            <person name="Li S."/>
            <person name="Dong L."/>
            <person name="Huang Y."/>
            <person name="Li L."/>
            <person name="Xi Y."/>
            <person name="Qi Q."/>
            <person name="Li W."/>
            <person name="Zhang B."/>
            <person name="Hu W."/>
            <person name="Zhang Y."/>
            <person name="Tian X."/>
            <person name="Jiao Y."/>
            <person name="Liang X."/>
            <person name="Jin J."/>
            <person name="Gao L."/>
            <person name="Zheng W."/>
            <person name="Hao B."/>
            <person name="Liu S.-M."/>
            <person name="Wang W."/>
            <person name="Yuan L."/>
            <person name="Cao M."/>
            <person name="McDermott J."/>
            <person name="Samudrala R."/>
            <person name="Wang J."/>
            <person name="Wong G.K.-S."/>
            <person name="Yang H."/>
        </authorList>
    </citation>
    <scope>NUCLEOTIDE SEQUENCE [LARGE SCALE GENOMIC DNA]</scope>
    <source>
        <strain>cv. Nipponbare</strain>
    </source>
</reference>
<reference key="5">
    <citation type="journal article" date="2003" name="Science">
        <title>Collection, mapping, and annotation of over 28,000 cDNA clones from japonica rice.</title>
        <authorList>
            <consortium name="The rice full-length cDNA consortium"/>
        </authorList>
    </citation>
    <scope>NUCLEOTIDE SEQUENCE [LARGE SCALE MRNA]</scope>
    <source>
        <strain>cv. Nipponbare</strain>
    </source>
</reference>
<evidence type="ECO:0000250" key="1"/>
<evidence type="ECO:0000255" key="2"/>
<evidence type="ECO:0000256" key="3">
    <source>
        <dbReference type="SAM" id="MobiDB-lite"/>
    </source>
</evidence>
<evidence type="ECO:0000305" key="4"/>
<name>XCT_ORYSJ</name>
<dbReference type="EMBL" id="AP006067">
    <property type="protein sequence ID" value="BAD34215.1"/>
    <property type="molecule type" value="Genomic_DNA"/>
</dbReference>
<dbReference type="EMBL" id="AP008215">
    <property type="protein sequence ID" value="BAF25694.1"/>
    <property type="molecule type" value="Genomic_DNA"/>
</dbReference>
<dbReference type="EMBL" id="AP014965">
    <property type="protein sequence ID" value="BAT09143.1"/>
    <property type="molecule type" value="Genomic_DNA"/>
</dbReference>
<dbReference type="EMBL" id="CM000146">
    <property type="protein sequence ID" value="EEE70122.1"/>
    <property type="molecule type" value="Genomic_DNA"/>
</dbReference>
<dbReference type="EMBL" id="AK071211">
    <property type="protein sequence ID" value="BAG92374.1"/>
    <property type="molecule type" value="mRNA"/>
</dbReference>
<dbReference type="RefSeq" id="XP_015651452.1">
    <property type="nucleotide sequence ID" value="XM_015795966.1"/>
</dbReference>
<dbReference type="SMR" id="Q69JZ7"/>
<dbReference type="FunCoup" id="Q69JZ7">
    <property type="interactions" value="2478"/>
</dbReference>
<dbReference type="STRING" id="39947.Q69JZ7"/>
<dbReference type="PaxDb" id="39947-Q69JZ7"/>
<dbReference type="EnsemblPlants" id="Os09t0535300-01">
    <property type="protein sequence ID" value="Os09t0535300-01"/>
    <property type="gene ID" value="Os09g0535300"/>
</dbReference>
<dbReference type="Gramene" id="Os09t0535300-01">
    <property type="protein sequence ID" value="Os09t0535300-01"/>
    <property type="gene ID" value="Os09g0535300"/>
</dbReference>
<dbReference type="KEGG" id="dosa:Os09g0535300"/>
<dbReference type="eggNOG" id="KOG2894">
    <property type="taxonomic scope" value="Eukaryota"/>
</dbReference>
<dbReference type="HOGENOM" id="CLU_037985_1_1_1"/>
<dbReference type="InParanoid" id="Q69JZ7"/>
<dbReference type="OMA" id="DFIWVFL"/>
<dbReference type="OrthoDB" id="1562195at2759"/>
<dbReference type="Proteomes" id="UP000000763">
    <property type="component" value="Chromosome 9"/>
</dbReference>
<dbReference type="Proteomes" id="UP000007752">
    <property type="component" value="Chromosome 9"/>
</dbReference>
<dbReference type="Proteomes" id="UP000059680">
    <property type="component" value="Chromosome 9"/>
</dbReference>
<dbReference type="GO" id="GO:0005634">
    <property type="term" value="C:nucleus"/>
    <property type="evidence" value="ECO:0000318"/>
    <property type="project" value="GO_Central"/>
</dbReference>
<dbReference type="GO" id="GO:0006325">
    <property type="term" value="P:chromatin organization"/>
    <property type="evidence" value="ECO:0000318"/>
    <property type="project" value="GO_Central"/>
</dbReference>
<dbReference type="GO" id="GO:0009873">
    <property type="term" value="P:ethylene-activated signaling pathway"/>
    <property type="evidence" value="ECO:0007669"/>
    <property type="project" value="EnsemblPlants"/>
</dbReference>
<dbReference type="GO" id="GO:0035196">
    <property type="term" value="P:miRNA processing"/>
    <property type="evidence" value="ECO:0007669"/>
    <property type="project" value="EnsemblPlants"/>
</dbReference>
<dbReference type="GO" id="GO:0042752">
    <property type="term" value="P:regulation of circadian rhythm"/>
    <property type="evidence" value="ECO:0007669"/>
    <property type="project" value="EnsemblPlants"/>
</dbReference>
<dbReference type="GO" id="GO:0010099">
    <property type="term" value="P:regulation of photomorphogenesis"/>
    <property type="evidence" value="ECO:0007669"/>
    <property type="project" value="EnsemblPlants"/>
</dbReference>
<dbReference type="GO" id="GO:0009637">
    <property type="term" value="P:response to blue light"/>
    <property type="evidence" value="ECO:0007669"/>
    <property type="project" value="EnsemblPlants"/>
</dbReference>
<dbReference type="GO" id="GO:0010114">
    <property type="term" value="P:response to red light"/>
    <property type="evidence" value="ECO:0007669"/>
    <property type="project" value="EnsemblPlants"/>
</dbReference>
<dbReference type="GO" id="GO:0048511">
    <property type="term" value="P:rhythmic process"/>
    <property type="evidence" value="ECO:0007669"/>
    <property type="project" value="UniProtKB-KW"/>
</dbReference>
<dbReference type="InterPro" id="IPR048337">
    <property type="entry name" value="FAM50A/XAP5_C"/>
</dbReference>
<dbReference type="InterPro" id="IPR007005">
    <property type="entry name" value="XAP5"/>
</dbReference>
<dbReference type="PANTHER" id="PTHR12722:SF0">
    <property type="entry name" value="PROTEIN FAM50A"/>
    <property type="match status" value="1"/>
</dbReference>
<dbReference type="PANTHER" id="PTHR12722">
    <property type="entry name" value="XAP-5 PROTEIN-RELATED"/>
    <property type="match status" value="1"/>
</dbReference>
<dbReference type="Pfam" id="PF04921">
    <property type="entry name" value="XAP5"/>
    <property type="match status" value="1"/>
</dbReference>
<keyword id="KW-0090">Biological rhythms</keyword>
<keyword id="KW-0175">Coiled coil</keyword>
<keyword id="KW-0539">Nucleus</keyword>
<keyword id="KW-1185">Reference proteome</keyword>